<sequence length="490" mass="58499">MHHCKRYRSPEPDPYLSYRWKRRRSYSREHEGRLRYPSRREPPPRRSRSRSHDRIPYQRRYREHRDSDTYRCEERSPSFGEDCYGSSRSRHRRRSRERAPYRTRKHAHHCHKRRTRSCSSASSRSQQSSKRSSRSVEDDKEGHLVCRIGDWLQERYEIVGNLGEGTFGKVVECLDHARGKSQVALKIIRNVGKYREAARLEINVLKKIKEKDKENKFLCVLMSDWFNFHGHMCIAFELLGKNTFEFLKENNFQPYPLPHVRHMAYQLCHALRFLHENQLTHTDLKPENILFVNSEFETLYNEHKSCEEKSVKNTSIRVADFGSATFDHEHHTTIVATRHYRPPEVILELGWAQPCDVWSIGCILFEYYRGFTLFQTHENREHLVMMEKILGPIPSHMIHRTRKQKYFYKGGLVWDENSSDGRYVKENCKPLKSYMLQDSLEHVQLFDLMRRMLEFDPAQRITLAEALLHPFFAGLTPEERSFHSSRNPSR</sequence>
<evidence type="ECO:0000250" key="1">
    <source>
        <dbReference type="UniProtKB" id="P49761"/>
    </source>
</evidence>
<evidence type="ECO:0000255" key="2">
    <source>
        <dbReference type="PROSITE-ProRule" id="PRU00159"/>
    </source>
</evidence>
<evidence type="ECO:0000255" key="3">
    <source>
        <dbReference type="PROSITE-ProRule" id="PRU10027"/>
    </source>
</evidence>
<evidence type="ECO:0000256" key="4">
    <source>
        <dbReference type="SAM" id="MobiDB-lite"/>
    </source>
</evidence>
<evidence type="ECO:0000269" key="5">
    <source>
    </source>
</evidence>
<evidence type="ECO:0000269" key="6">
    <source>
    </source>
</evidence>
<evidence type="ECO:0000269" key="7">
    <source>
    </source>
</evidence>
<evidence type="ECO:0000305" key="8"/>
<evidence type="ECO:0000312" key="9">
    <source>
        <dbReference type="MGI" id="MGI:1098670"/>
    </source>
</evidence>
<evidence type="ECO:0007744" key="10">
    <source>
    </source>
</evidence>
<gene>
    <name evidence="9" type="primary">Clk3</name>
</gene>
<keyword id="KW-0067">ATP-binding</keyword>
<keyword id="KW-0963">Cytoplasm</keyword>
<keyword id="KW-0968">Cytoplasmic vesicle</keyword>
<keyword id="KW-0418">Kinase</keyword>
<keyword id="KW-0547">Nucleotide-binding</keyword>
<keyword id="KW-0539">Nucleus</keyword>
<keyword id="KW-0597">Phosphoprotein</keyword>
<keyword id="KW-1185">Reference proteome</keyword>
<keyword id="KW-0723">Serine/threonine-protein kinase</keyword>
<keyword id="KW-0808">Transferase</keyword>
<keyword id="KW-0829">Tyrosine-protein kinase</keyword>
<organism>
    <name type="scientific">Mus musculus</name>
    <name type="common">Mouse</name>
    <dbReference type="NCBI Taxonomy" id="10090"/>
    <lineage>
        <taxon>Eukaryota</taxon>
        <taxon>Metazoa</taxon>
        <taxon>Chordata</taxon>
        <taxon>Craniata</taxon>
        <taxon>Vertebrata</taxon>
        <taxon>Euteleostomi</taxon>
        <taxon>Mammalia</taxon>
        <taxon>Eutheria</taxon>
        <taxon>Euarchontoglires</taxon>
        <taxon>Glires</taxon>
        <taxon>Rodentia</taxon>
        <taxon>Myomorpha</taxon>
        <taxon>Muroidea</taxon>
        <taxon>Muridae</taxon>
        <taxon>Murinae</taxon>
        <taxon>Mus</taxon>
        <taxon>Mus</taxon>
    </lineage>
</organism>
<reference key="1">
    <citation type="journal article" date="1997" name="Biochem. J.">
        <title>Characterization and comparison of four serine- and arginine-rich (SR) protein kinases.</title>
        <authorList>
            <person name="Nayler O."/>
            <person name="Stamm S."/>
            <person name="Ullrich A."/>
        </authorList>
    </citation>
    <scope>NUCLEOTIDE SEQUENCE [MRNA]</scope>
    <scope>FUNCTION</scope>
    <scope>PHOSPHORYLATION</scope>
    <scope>SUBCELLULAR LOCATION</scope>
</reference>
<reference key="2">
    <citation type="journal article" date="2005" name="Science">
        <title>The transcriptional landscape of the mammalian genome.</title>
        <authorList>
            <person name="Carninci P."/>
            <person name="Kasukawa T."/>
            <person name="Katayama S."/>
            <person name="Gough J."/>
            <person name="Frith M.C."/>
            <person name="Maeda N."/>
            <person name="Oyama R."/>
            <person name="Ravasi T."/>
            <person name="Lenhard B."/>
            <person name="Wells C."/>
            <person name="Kodzius R."/>
            <person name="Shimokawa K."/>
            <person name="Bajic V.B."/>
            <person name="Brenner S.E."/>
            <person name="Batalov S."/>
            <person name="Forrest A.R."/>
            <person name="Zavolan M."/>
            <person name="Davis M.J."/>
            <person name="Wilming L.G."/>
            <person name="Aidinis V."/>
            <person name="Allen J.E."/>
            <person name="Ambesi-Impiombato A."/>
            <person name="Apweiler R."/>
            <person name="Aturaliya R.N."/>
            <person name="Bailey T.L."/>
            <person name="Bansal M."/>
            <person name="Baxter L."/>
            <person name="Beisel K.W."/>
            <person name="Bersano T."/>
            <person name="Bono H."/>
            <person name="Chalk A.M."/>
            <person name="Chiu K.P."/>
            <person name="Choudhary V."/>
            <person name="Christoffels A."/>
            <person name="Clutterbuck D.R."/>
            <person name="Crowe M.L."/>
            <person name="Dalla E."/>
            <person name="Dalrymple B.P."/>
            <person name="de Bono B."/>
            <person name="Della Gatta G."/>
            <person name="di Bernardo D."/>
            <person name="Down T."/>
            <person name="Engstrom P."/>
            <person name="Fagiolini M."/>
            <person name="Faulkner G."/>
            <person name="Fletcher C.F."/>
            <person name="Fukushima T."/>
            <person name="Furuno M."/>
            <person name="Futaki S."/>
            <person name="Gariboldi M."/>
            <person name="Georgii-Hemming P."/>
            <person name="Gingeras T.R."/>
            <person name="Gojobori T."/>
            <person name="Green R.E."/>
            <person name="Gustincich S."/>
            <person name="Harbers M."/>
            <person name="Hayashi Y."/>
            <person name="Hensch T.K."/>
            <person name="Hirokawa N."/>
            <person name="Hill D."/>
            <person name="Huminiecki L."/>
            <person name="Iacono M."/>
            <person name="Ikeo K."/>
            <person name="Iwama A."/>
            <person name="Ishikawa T."/>
            <person name="Jakt M."/>
            <person name="Kanapin A."/>
            <person name="Katoh M."/>
            <person name="Kawasawa Y."/>
            <person name="Kelso J."/>
            <person name="Kitamura H."/>
            <person name="Kitano H."/>
            <person name="Kollias G."/>
            <person name="Krishnan S.P."/>
            <person name="Kruger A."/>
            <person name="Kummerfeld S.K."/>
            <person name="Kurochkin I.V."/>
            <person name="Lareau L.F."/>
            <person name="Lazarevic D."/>
            <person name="Lipovich L."/>
            <person name="Liu J."/>
            <person name="Liuni S."/>
            <person name="McWilliam S."/>
            <person name="Madan Babu M."/>
            <person name="Madera M."/>
            <person name="Marchionni L."/>
            <person name="Matsuda H."/>
            <person name="Matsuzawa S."/>
            <person name="Miki H."/>
            <person name="Mignone F."/>
            <person name="Miyake S."/>
            <person name="Morris K."/>
            <person name="Mottagui-Tabar S."/>
            <person name="Mulder N."/>
            <person name="Nakano N."/>
            <person name="Nakauchi H."/>
            <person name="Ng P."/>
            <person name="Nilsson R."/>
            <person name="Nishiguchi S."/>
            <person name="Nishikawa S."/>
            <person name="Nori F."/>
            <person name="Ohara O."/>
            <person name="Okazaki Y."/>
            <person name="Orlando V."/>
            <person name="Pang K.C."/>
            <person name="Pavan W.J."/>
            <person name="Pavesi G."/>
            <person name="Pesole G."/>
            <person name="Petrovsky N."/>
            <person name="Piazza S."/>
            <person name="Reed J."/>
            <person name="Reid J.F."/>
            <person name="Ring B.Z."/>
            <person name="Ringwald M."/>
            <person name="Rost B."/>
            <person name="Ruan Y."/>
            <person name="Salzberg S.L."/>
            <person name="Sandelin A."/>
            <person name="Schneider C."/>
            <person name="Schoenbach C."/>
            <person name="Sekiguchi K."/>
            <person name="Semple C.A."/>
            <person name="Seno S."/>
            <person name="Sessa L."/>
            <person name="Sheng Y."/>
            <person name="Shibata Y."/>
            <person name="Shimada H."/>
            <person name="Shimada K."/>
            <person name="Silva D."/>
            <person name="Sinclair B."/>
            <person name="Sperling S."/>
            <person name="Stupka E."/>
            <person name="Sugiura K."/>
            <person name="Sultana R."/>
            <person name="Takenaka Y."/>
            <person name="Taki K."/>
            <person name="Tammoja K."/>
            <person name="Tan S.L."/>
            <person name="Tang S."/>
            <person name="Taylor M.S."/>
            <person name="Tegner J."/>
            <person name="Teichmann S.A."/>
            <person name="Ueda H.R."/>
            <person name="van Nimwegen E."/>
            <person name="Verardo R."/>
            <person name="Wei C.L."/>
            <person name="Yagi K."/>
            <person name="Yamanishi H."/>
            <person name="Zabarovsky E."/>
            <person name="Zhu S."/>
            <person name="Zimmer A."/>
            <person name="Hide W."/>
            <person name="Bult C."/>
            <person name="Grimmond S.M."/>
            <person name="Teasdale R.D."/>
            <person name="Liu E.T."/>
            <person name="Brusic V."/>
            <person name="Quackenbush J."/>
            <person name="Wahlestedt C."/>
            <person name="Mattick J.S."/>
            <person name="Hume D.A."/>
            <person name="Kai C."/>
            <person name="Sasaki D."/>
            <person name="Tomaru Y."/>
            <person name="Fukuda S."/>
            <person name="Kanamori-Katayama M."/>
            <person name="Suzuki M."/>
            <person name="Aoki J."/>
            <person name="Arakawa T."/>
            <person name="Iida J."/>
            <person name="Imamura K."/>
            <person name="Itoh M."/>
            <person name="Kato T."/>
            <person name="Kawaji H."/>
            <person name="Kawagashira N."/>
            <person name="Kawashima T."/>
            <person name="Kojima M."/>
            <person name="Kondo S."/>
            <person name="Konno H."/>
            <person name="Nakano K."/>
            <person name="Ninomiya N."/>
            <person name="Nishio T."/>
            <person name="Okada M."/>
            <person name="Plessy C."/>
            <person name="Shibata K."/>
            <person name="Shiraki T."/>
            <person name="Suzuki S."/>
            <person name="Tagami M."/>
            <person name="Waki K."/>
            <person name="Watahiki A."/>
            <person name="Okamura-Oho Y."/>
            <person name="Suzuki H."/>
            <person name="Kawai J."/>
            <person name="Hayashizaki Y."/>
        </authorList>
    </citation>
    <scope>NUCLEOTIDE SEQUENCE [LARGE SCALE MRNA]</scope>
    <source>
        <strain>C57BL/6J</strain>
        <strain>NOD</strain>
        <tissue>Brain</tissue>
        <tissue>Kidney</tissue>
        <tissue>Placenta</tissue>
        <tissue>Thymus</tissue>
        <tissue>Tongue</tissue>
    </source>
</reference>
<reference key="3">
    <citation type="journal article" date="2004" name="Genome Res.">
        <title>The status, quality, and expansion of the NIH full-length cDNA project: the Mammalian Gene Collection (MGC).</title>
        <authorList>
            <consortium name="The MGC Project Team"/>
        </authorList>
    </citation>
    <scope>NUCLEOTIDE SEQUENCE [LARGE SCALE MRNA]</scope>
    <source>
        <tissue>Olfactory epithelium</tissue>
    </source>
</reference>
<reference key="4">
    <citation type="journal article" date="1999" name="Exp. Cell Res.">
        <title>The dual specificity protein kinase CLK3 is abundantly expressed in mature mouse spermatozoa.</title>
        <authorList>
            <person name="Menegay H."/>
            <person name="Moeslein F."/>
            <person name="Landreth G."/>
        </authorList>
    </citation>
    <scope>TISSUE SPECIFICITY</scope>
    <scope>CATALYTIC ACTIVITY</scope>
    <scope>SUBCELLULAR LOCATION</scope>
</reference>
<reference key="5">
    <citation type="journal article" date="2010" name="Cell">
        <title>A tissue-specific atlas of mouse protein phosphorylation and expression.</title>
        <authorList>
            <person name="Huttlin E.L."/>
            <person name="Jedrychowski M.P."/>
            <person name="Elias J.E."/>
            <person name="Goswami T."/>
            <person name="Rad R."/>
            <person name="Beausoleil S.A."/>
            <person name="Villen J."/>
            <person name="Haas W."/>
            <person name="Sowa M.E."/>
            <person name="Gygi S.P."/>
        </authorList>
    </citation>
    <scope>PHOSPHORYLATION [LARGE SCALE ANALYSIS] AT SER-9; SER-76 AND SER-78</scope>
    <scope>IDENTIFICATION BY MASS SPECTROMETRY [LARGE SCALE ANALYSIS]</scope>
    <source>
        <tissue>Brown adipose tissue</tissue>
        <tissue>Kidney</tissue>
        <tissue>Liver</tissue>
        <tissue>Lung</tissue>
        <tissue>Pancreas</tissue>
        <tissue>Spleen</tissue>
        <tissue>Testis</tissue>
    </source>
</reference>
<reference key="6">
    <citation type="journal article" date="2011" name="J. Med. Chem.">
        <title>Leucettines, a class of potent inhibitors of cdc2-like kinases and dual specificity, tyrosine phosphorylation regulated kinases derived from the marine sponge leucettamine B: modulation of alternative pre-RNA splicing.</title>
        <authorList>
            <person name="Debdab M."/>
            <person name="Carreaux F."/>
            <person name="Renault S."/>
            <person name="Soundararajan M."/>
            <person name="Fedorov O."/>
            <person name="Filippakopoulos P."/>
            <person name="Lozach O."/>
            <person name="Babault L."/>
            <person name="Tahtouh T."/>
            <person name="Baratte B."/>
            <person name="Ogawa Y."/>
            <person name="Hagiwara M."/>
            <person name="Eisenreich A."/>
            <person name="Rauch U."/>
            <person name="Knapp S."/>
            <person name="Meijer L."/>
            <person name="Bazureau J.P."/>
        </authorList>
    </citation>
    <scope>ACTIVITY REGULATION</scope>
</reference>
<proteinExistence type="evidence at protein level"/>
<protein>
    <recommendedName>
        <fullName evidence="8">Dual specificity protein kinase CLK3</fullName>
        <ecNumber>2.7.12.1</ecNumber>
    </recommendedName>
    <alternativeName>
        <fullName>CDC-like kinase 3</fullName>
    </alternativeName>
</protein>
<comment type="function">
    <text evidence="7">Dual specificity kinase acting on both serine/threonine and tyrosine-containing substrates. Phosphorylates serine- and arginine-rich (SR) proteins of the spliceosomal complex. May be a constituent of a network of regulatory mechanisms that enable SR proteins to control RNA splicing and can cause redistribution of SR proteins from speckles to a diffuse nucleoplasmic distribution. Phosphorylates SRSF1 and SRSF3. Regulates the alternative splicing of tissue factor (F3) pre-mRNA in endothelial cells.</text>
</comment>
<comment type="catalytic activity">
    <reaction evidence="5">
        <text>L-seryl-[protein] + ATP = O-phospho-L-seryl-[protein] + ADP + H(+)</text>
        <dbReference type="Rhea" id="RHEA:17989"/>
        <dbReference type="Rhea" id="RHEA-COMP:9863"/>
        <dbReference type="Rhea" id="RHEA-COMP:11604"/>
        <dbReference type="ChEBI" id="CHEBI:15378"/>
        <dbReference type="ChEBI" id="CHEBI:29999"/>
        <dbReference type="ChEBI" id="CHEBI:30616"/>
        <dbReference type="ChEBI" id="CHEBI:83421"/>
        <dbReference type="ChEBI" id="CHEBI:456216"/>
        <dbReference type="EC" id="2.7.12.1"/>
    </reaction>
</comment>
<comment type="catalytic activity">
    <reaction evidence="5">
        <text>L-threonyl-[protein] + ATP = O-phospho-L-threonyl-[protein] + ADP + H(+)</text>
        <dbReference type="Rhea" id="RHEA:46608"/>
        <dbReference type="Rhea" id="RHEA-COMP:11060"/>
        <dbReference type="Rhea" id="RHEA-COMP:11605"/>
        <dbReference type="ChEBI" id="CHEBI:15378"/>
        <dbReference type="ChEBI" id="CHEBI:30013"/>
        <dbReference type="ChEBI" id="CHEBI:30616"/>
        <dbReference type="ChEBI" id="CHEBI:61977"/>
        <dbReference type="ChEBI" id="CHEBI:456216"/>
        <dbReference type="EC" id="2.7.12.1"/>
    </reaction>
</comment>
<comment type="catalytic activity">
    <reaction>
        <text>L-tyrosyl-[protein] + ATP = O-phospho-L-tyrosyl-[protein] + ADP + H(+)</text>
        <dbReference type="Rhea" id="RHEA:10596"/>
        <dbReference type="Rhea" id="RHEA-COMP:10136"/>
        <dbReference type="Rhea" id="RHEA-COMP:20101"/>
        <dbReference type="ChEBI" id="CHEBI:15378"/>
        <dbReference type="ChEBI" id="CHEBI:30616"/>
        <dbReference type="ChEBI" id="CHEBI:46858"/>
        <dbReference type="ChEBI" id="CHEBI:61978"/>
        <dbReference type="ChEBI" id="CHEBI:456216"/>
        <dbReference type="EC" id="2.7.12.1"/>
    </reaction>
</comment>
<comment type="activity regulation">
    <text evidence="6">Leucettine L41 inhibits its kinase activity and affects the regulation of alternative splicing mediated by phosphorylation of SR proteins.</text>
</comment>
<comment type="subcellular location">
    <subcellularLocation>
        <location>Nucleus</location>
    </subcellularLocation>
    <subcellularLocation>
        <location>Cytoplasm</location>
    </subcellularLocation>
    <subcellularLocation>
        <location>Cytoplasmic vesicle</location>
        <location>Secretory vesicle</location>
        <location>Acrosome</location>
    </subcellularLocation>
</comment>
<comment type="tissue specificity">
    <text evidence="5">Present at high levels in testis and ovary. In testis, expression is restricted to elongated, maturing spermatozoa. Also present in spleen, brain, lung and liver (at protein level).</text>
</comment>
<comment type="PTM">
    <text evidence="7">Autophosphorylates on all three types of residues.</text>
</comment>
<comment type="similarity">
    <text evidence="8">Belongs to the protein kinase superfamily. CMGC Ser/Thr protein kinase family. Lammer subfamily.</text>
</comment>
<comment type="sequence caution" evidence="8">
    <conflict type="erroneous initiation">
        <sequence resource="EMBL-CDS" id="BAE27551"/>
    </conflict>
    <text>Extended N-terminus.</text>
</comment>
<comment type="sequence caution" evidence="8">
    <conflict type="erroneous initiation">
        <sequence resource="EMBL-CDS" id="BAE39405"/>
    </conflict>
    <text>Extended N-terminus.</text>
</comment>
<comment type="sequence caution" evidence="8">
    <conflict type="frameshift">
        <sequence resource="EMBL-CDS" id="BAE39405"/>
    </conflict>
</comment>
<feature type="chain" id="PRO_0000085871" description="Dual specificity protein kinase CLK3">
    <location>
        <begin position="1"/>
        <end position="490"/>
    </location>
</feature>
<feature type="domain" description="Protein kinase" evidence="2">
    <location>
        <begin position="156"/>
        <end position="472"/>
    </location>
</feature>
<feature type="region of interest" description="Disordered" evidence="4">
    <location>
        <begin position="1"/>
        <end position="138"/>
    </location>
</feature>
<feature type="compositionally biased region" description="Basic and acidic residues" evidence="4">
    <location>
        <begin position="26"/>
        <end position="56"/>
    </location>
</feature>
<feature type="compositionally biased region" description="Basic and acidic residues" evidence="4">
    <location>
        <begin position="63"/>
        <end position="76"/>
    </location>
</feature>
<feature type="compositionally biased region" description="Basic residues" evidence="4">
    <location>
        <begin position="88"/>
        <end position="116"/>
    </location>
</feature>
<feature type="compositionally biased region" description="Low complexity" evidence="4">
    <location>
        <begin position="117"/>
        <end position="130"/>
    </location>
</feature>
<feature type="active site" description="Proton acceptor" evidence="2 3">
    <location>
        <position position="283"/>
    </location>
</feature>
<feature type="binding site" evidence="2">
    <location>
        <begin position="162"/>
        <end position="170"/>
    </location>
    <ligand>
        <name>ATP</name>
        <dbReference type="ChEBI" id="CHEBI:30616"/>
    </ligand>
</feature>
<feature type="binding site" evidence="2">
    <location>
        <position position="186"/>
    </location>
    <ligand>
        <name>ATP</name>
        <dbReference type="ChEBI" id="CHEBI:30616"/>
    </ligand>
</feature>
<feature type="modified residue" description="Phosphotyrosine" evidence="1">
    <location>
        <position position="7"/>
    </location>
</feature>
<feature type="modified residue" description="Phosphoserine" evidence="10">
    <location>
        <position position="9"/>
    </location>
</feature>
<feature type="modified residue" description="Phosphoserine" evidence="1">
    <location>
        <position position="49"/>
    </location>
</feature>
<feature type="modified residue" description="Phosphoserine" evidence="1">
    <location>
        <position position="51"/>
    </location>
</feature>
<feature type="modified residue" description="Phosphoserine" evidence="1">
    <location>
        <position position="67"/>
    </location>
</feature>
<feature type="modified residue" description="Phosphoserine" evidence="10">
    <location>
        <position position="76"/>
    </location>
</feature>
<feature type="modified residue" description="Phosphoserine" evidence="10">
    <location>
        <position position="78"/>
    </location>
</feature>
<feature type="modified residue" description="Phosphoserine" evidence="1">
    <location>
        <position position="135"/>
    </location>
</feature>
<feature type="sequence conflict" description="In Ref. 1; AAB87509." evidence="8" ref="1">
    <original>S</original>
    <variation>T</variation>
    <location>
        <position position="17"/>
    </location>
</feature>
<feature type="sequence conflict" description="In Ref. 2; BAE43216." evidence="8" ref="2">
    <original>T</original>
    <variation>L</variation>
    <location>
        <position position="166"/>
    </location>
</feature>
<feature type="sequence conflict" description="In Ref. 2; BAC41138." evidence="8" ref="2">
    <original>T</original>
    <variation>A</variation>
    <location>
        <position position="280"/>
    </location>
</feature>
<name>CLK3_MOUSE</name>
<accession>O35492</accession>
<accession>Q3TJU0</accession>
<accession>Q3UIF5</accession>
<accession>Q3V463</accession>
<accession>Q5U4I1</accession>
<accession>Q8C1V1</accession>
<dbReference type="EC" id="2.7.12.1"/>
<dbReference type="EMBL" id="AF033565">
    <property type="protein sequence ID" value="AAB87509.1"/>
    <property type="molecule type" value="mRNA"/>
</dbReference>
<dbReference type="EMBL" id="AK090215">
    <property type="protein sequence ID" value="BAC41138.1"/>
    <property type="molecule type" value="mRNA"/>
</dbReference>
<dbReference type="EMBL" id="AK133936">
    <property type="protein sequence ID" value="BAE21937.1"/>
    <property type="molecule type" value="mRNA"/>
</dbReference>
<dbReference type="EMBL" id="AK146942">
    <property type="protein sequence ID" value="BAE27551.1"/>
    <property type="status" value="ALT_INIT"/>
    <property type="molecule type" value="mRNA"/>
</dbReference>
<dbReference type="EMBL" id="AK154003">
    <property type="protein sequence ID" value="BAE32308.1"/>
    <property type="molecule type" value="mRNA"/>
</dbReference>
<dbReference type="EMBL" id="AK167300">
    <property type="protein sequence ID" value="BAE39405.1"/>
    <property type="status" value="ALT_SEQ"/>
    <property type="molecule type" value="mRNA"/>
</dbReference>
<dbReference type="EMBL" id="AK009908">
    <property type="protein sequence ID" value="BAE43216.1"/>
    <property type="molecule type" value="mRNA"/>
</dbReference>
<dbReference type="EMBL" id="BC085084">
    <property type="protein sequence ID" value="AAH85084.1"/>
    <property type="molecule type" value="mRNA"/>
</dbReference>
<dbReference type="CCDS" id="CCDS23232.1"/>
<dbReference type="RefSeq" id="NP_001397105.1">
    <property type="nucleotide sequence ID" value="NM_001410176.1"/>
</dbReference>
<dbReference type="RefSeq" id="NP_001397106.1">
    <property type="nucleotide sequence ID" value="NM_001410177.1"/>
</dbReference>
<dbReference type="RefSeq" id="NP_001397107.1">
    <property type="nucleotide sequence ID" value="NM_001410178.1"/>
</dbReference>
<dbReference type="RefSeq" id="NP_001397108.1">
    <property type="nucleotide sequence ID" value="NM_001410179.1"/>
</dbReference>
<dbReference type="RefSeq" id="NP_001397109.1">
    <property type="nucleotide sequence ID" value="NM_001410180.1"/>
</dbReference>
<dbReference type="RefSeq" id="NP_031739.3">
    <property type="nucleotide sequence ID" value="NM_007713.4"/>
</dbReference>
<dbReference type="RefSeq" id="XP_006510802.1">
    <property type="nucleotide sequence ID" value="XM_006510739.3"/>
</dbReference>
<dbReference type="RefSeq" id="XP_017168549.1">
    <property type="nucleotide sequence ID" value="XM_017313060.1"/>
</dbReference>
<dbReference type="SMR" id="O35492"/>
<dbReference type="BioGRID" id="221868">
    <property type="interactions" value="7"/>
</dbReference>
<dbReference type="FunCoup" id="O35492">
    <property type="interactions" value="3093"/>
</dbReference>
<dbReference type="IntAct" id="O35492">
    <property type="interactions" value="1"/>
</dbReference>
<dbReference type="MINT" id="O35492"/>
<dbReference type="STRING" id="10090.ENSMUSP00000067341"/>
<dbReference type="BindingDB" id="O35492"/>
<dbReference type="ChEMBL" id="CHEMBL1075282"/>
<dbReference type="GuidetoPHARMACOLOGY" id="1992"/>
<dbReference type="iPTMnet" id="O35492"/>
<dbReference type="PhosphoSitePlus" id="O35492"/>
<dbReference type="jPOST" id="O35492"/>
<dbReference type="PaxDb" id="10090-ENSMUSP00000067341"/>
<dbReference type="PeptideAtlas" id="O35492"/>
<dbReference type="ProteomicsDB" id="283304"/>
<dbReference type="Pumba" id="O35492"/>
<dbReference type="Antibodypedia" id="26974">
    <property type="antibodies" value="159 antibodies from 26 providers"/>
</dbReference>
<dbReference type="DNASU" id="102414"/>
<dbReference type="Ensembl" id="ENSMUST00000065330.8">
    <property type="protein sequence ID" value="ENSMUSP00000067341.8"/>
    <property type="gene ID" value="ENSMUSG00000032316.9"/>
</dbReference>
<dbReference type="GeneID" id="102414"/>
<dbReference type="KEGG" id="mmu:102414"/>
<dbReference type="UCSC" id="uc009pvr.1">
    <property type="organism name" value="mouse"/>
</dbReference>
<dbReference type="AGR" id="MGI:1098670"/>
<dbReference type="CTD" id="1198"/>
<dbReference type="MGI" id="MGI:1098670">
    <property type="gene designation" value="Clk3"/>
</dbReference>
<dbReference type="VEuPathDB" id="HostDB:ENSMUSG00000032316"/>
<dbReference type="eggNOG" id="KOG0671">
    <property type="taxonomic scope" value="Eukaryota"/>
</dbReference>
<dbReference type="GeneTree" id="ENSGT00940000160359"/>
<dbReference type="HOGENOM" id="CLU_000288_5_16_1"/>
<dbReference type="InParanoid" id="O35492"/>
<dbReference type="OMA" id="IYAVCLM"/>
<dbReference type="OrthoDB" id="283111at2759"/>
<dbReference type="PhylomeDB" id="O35492"/>
<dbReference type="TreeFam" id="TF101041"/>
<dbReference type="BRENDA" id="2.7.12.1">
    <property type="organism ID" value="3474"/>
</dbReference>
<dbReference type="BioGRID-ORCS" id="102414">
    <property type="hits" value="7 hits in 83 CRISPR screens"/>
</dbReference>
<dbReference type="ChiTaRS" id="Clk3">
    <property type="organism name" value="mouse"/>
</dbReference>
<dbReference type="PRO" id="PR:O35492"/>
<dbReference type="Proteomes" id="UP000000589">
    <property type="component" value="Chromosome 9"/>
</dbReference>
<dbReference type="RNAct" id="O35492">
    <property type="molecule type" value="protein"/>
</dbReference>
<dbReference type="Bgee" id="ENSMUSG00000032316">
    <property type="expression patterns" value="Expressed in thymus and 272 other cell types or tissues"/>
</dbReference>
<dbReference type="ExpressionAtlas" id="O35492">
    <property type="expression patterns" value="baseline and differential"/>
</dbReference>
<dbReference type="GO" id="GO:0001669">
    <property type="term" value="C:acrosomal vesicle"/>
    <property type="evidence" value="ECO:0007669"/>
    <property type="project" value="UniProtKB-SubCell"/>
</dbReference>
<dbReference type="GO" id="GO:0045111">
    <property type="term" value="C:intermediate filament cytoskeleton"/>
    <property type="evidence" value="ECO:0007669"/>
    <property type="project" value="Ensembl"/>
</dbReference>
<dbReference type="GO" id="GO:0005654">
    <property type="term" value="C:nucleoplasm"/>
    <property type="evidence" value="ECO:0007669"/>
    <property type="project" value="Ensembl"/>
</dbReference>
<dbReference type="GO" id="GO:0005634">
    <property type="term" value="C:nucleus"/>
    <property type="evidence" value="ECO:0000314"/>
    <property type="project" value="MGI"/>
</dbReference>
<dbReference type="GO" id="GO:0005524">
    <property type="term" value="F:ATP binding"/>
    <property type="evidence" value="ECO:0007669"/>
    <property type="project" value="UniProtKB-KW"/>
</dbReference>
<dbReference type="GO" id="GO:0042802">
    <property type="term" value="F:identical protein binding"/>
    <property type="evidence" value="ECO:0007669"/>
    <property type="project" value="Ensembl"/>
</dbReference>
<dbReference type="GO" id="GO:0106310">
    <property type="term" value="F:protein serine kinase activity"/>
    <property type="evidence" value="ECO:0007669"/>
    <property type="project" value="RHEA"/>
</dbReference>
<dbReference type="GO" id="GO:0004674">
    <property type="term" value="F:protein serine/threonine kinase activity"/>
    <property type="evidence" value="ECO:0000314"/>
    <property type="project" value="UniProtKB"/>
</dbReference>
<dbReference type="GO" id="GO:0004712">
    <property type="term" value="F:protein serine/threonine/tyrosine kinase activity"/>
    <property type="evidence" value="ECO:0007669"/>
    <property type="project" value="UniProtKB-EC"/>
</dbReference>
<dbReference type="GO" id="GO:0004713">
    <property type="term" value="F:protein tyrosine kinase activity"/>
    <property type="evidence" value="ECO:0000314"/>
    <property type="project" value="MGI"/>
</dbReference>
<dbReference type="GO" id="GO:0006468">
    <property type="term" value="P:protein phosphorylation"/>
    <property type="evidence" value="ECO:0000314"/>
    <property type="project" value="UniProtKB"/>
</dbReference>
<dbReference type="GO" id="GO:0043484">
    <property type="term" value="P:regulation of RNA splicing"/>
    <property type="evidence" value="ECO:0007669"/>
    <property type="project" value="Ensembl"/>
</dbReference>
<dbReference type="CDD" id="cd14214">
    <property type="entry name" value="PKc_CLK3"/>
    <property type="match status" value="1"/>
</dbReference>
<dbReference type="FunFam" id="1.10.510.10:FF:000145">
    <property type="entry name" value="Dual specificity protein kinase CLK2"/>
    <property type="match status" value="1"/>
</dbReference>
<dbReference type="FunFam" id="3.30.200.20:FF:000061">
    <property type="entry name" value="Dual specificity protein kinase CLK2"/>
    <property type="match status" value="1"/>
</dbReference>
<dbReference type="Gene3D" id="3.30.200.20">
    <property type="entry name" value="Phosphorylase Kinase, domain 1"/>
    <property type="match status" value="1"/>
</dbReference>
<dbReference type="Gene3D" id="1.10.510.10">
    <property type="entry name" value="Transferase(Phosphotransferase) domain 1"/>
    <property type="match status" value="1"/>
</dbReference>
<dbReference type="InterPro" id="IPR051175">
    <property type="entry name" value="CLK_kinases"/>
</dbReference>
<dbReference type="InterPro" id="IPR011009">
    <property type="entry name" value="Kinase-like_dom_sf"/>
</dbReference>
<dbReference type="InterPro" id="IPR000719">
    <property type="entry name" value="Prot_kinase_dom"/>
</dbReference>
<dbReference type="InterPro" id="IPR017441">
    <property type="entry name" value="Protein_kinase_ATP_BS"/>
</dbReference>
<dbReference type="InterPro" id="IPR008271">
    <property type="entry name" value="Ser/Thr_kinase_AS"/>
</dbReference>
<dbReference type="PANTHER" id="PTHR45646:SF10">
    <property type="entry name" value="DUAL SPECIFICITY PROTEIN KINASE CLK3"/>
    <property type="match status" value="1"/>
</dbReference>
<dbReference type="PANTHER" id="PTHR45646">
    <property type="entry name" value="SERINE/THREONINE-PROTEIN KINASE DOA-RELATED"/>
    <property type="match status" value="1"/>
</dbReference>
<dbReference type="Pfam" id="PF00069">
    <property type="entry name" value="Pkinase"/>
    <property type="match status" value="1"/>
</dbReference>
<dbReference type="SMART" id="SM00220">
    <property type="entry name" value="S_TKc"/>
    <property type="match status" value="1"/>
</dbReference>
<dbReference type="SUPFAM" id="SSF56112">
    <property type="entry name" value="Protein kinase-like (PK-like)"/>
    <property type="match status" value="1"/>
</dbReference>
<dbReference type="PROSITE" id="PS00107">
    <property type="entry name" value="PROTEIN_KINASE_ATP"/>
    <property type="match status" value="1"/>
</dbReference>
<dbReference type="PROSITE" id="PS50011">
    <property type="entry name" value="PROTEIN_KINASE_DOM"/>
    <property type="match status" value="1"/>
</dbReference>
<dbReference type="PROSITE" id="PS00108">
    <property type="entry name" value="PROTEIN_KINASE_ST"/>
    <property type="match status" value="1"/>
</dbReference>